<gene>
    <name type="ORF">NFIA_031120</name>
</gene>
<name>NPIIA_NEOFI</name>
<protein>
    <recommendedName>
        <fullName>Neutral protease 2 homolog NFIA_031120</fullName>
        <ecNumber>3.4.24.39</ecNumber>
    </recommendedName>
    <alternativeName>
        <fullName>Deuterolysin NFIA_031120</fullName>
    </alternativeName>
</protein>
<dbReference type="EC" id="3.4.24.39"/>
<dbReference type="EMBL" id="DS027693">
    <property type="protein sequence ID" value="EAW20679.1"/>
    <property type="molecule type" value="Genomic_DNA"/>
</dbReference>
<dbReference type="RefSeq" id="XP_001262576.1">
    <property type="nucleotide sequence ID" value="XM_001262575.1"/>
</dbReference>
<dbReference type="SMR" id="A1DA48"/>
<dbReference type="STRING" id="331117.A1DA48"/>
<dbReference type="MEROPS" id="M35.002"/>
<dbReference type="EnsemblFungi" id="EAW20679">
    <property type="protein sequence ID" value="EAW20679"/>
    <property type="gene ID" value="NFIA_031120"/>
</dbReference>
<dbReference type="GeneID" id="4589113"/>
<dbReference type="KEGG" id="nfi:NFIA_031120"/>
<dbReference type="VEuPathDB" id="FungiDB:NFIA_031120"/>
<dbReference type="eggNOG" id="ENOG502SGF5">
    <property type="taxonomic scope" value="Eukaryota"/>
</dbReference>
<dbReference type="HOGENOM" id="CLU_039313_1_1_1"/>
<dbReference type="OMA" id="QTMWDGN"/>
<dbReference type="OrthoDB" id="412874at2759"/>
<dbReference type="Proteomes" id="UP000006702">
    <property type="component" value="Unassembled WGS sequence"/>
</dbReference>
<dbReference type="GO" id="GO:0005576">
    <property type="term" value="C:extracellular region"/>
    <property type="evidence" value="ECO:0007669"/>
    <property type="project" value="UniProtKB-SubCell"/>
</dbReference>
<dbReference type="GO" id="GO:0046872">
    <property type="term" value="F:metal ion binding"/>
    <property type="evidence" value="ECO:0007669"/>
    <property type="project" value="UniProtKB-KW"/>
</dbReference>
<dbReference type="GO" id="GO:0004222">
    <property type="term" value="F:metalloendopeptidase activity"/>
    <property type="evidence" value="ECO:0007669"/>
    <property type="project" value="InterPro"/>
</dbReference>
<dbReference type="GO" id="GO:0006508">
    <property type="term" value="P:proteolysis"/>
    <property type="evidence" value="ECO:0007669"/>
    <property type="project" value="UniProtKB-KW"/>
</dbReference>
<dbReference type="CDD" id="cd11008">
    <property type="entry name" value="M35_deuterolysin_like"/>
    <property type="match status" value="1"/>
</dbReference>
<dbReference type="Gene3D" id="2.60.40.2970">
    <property type="match status" value="1"/>
</dbReference>
<dbReference type="Gene3D" id="3.40.390.10">
    <property type="entry name" value="Collagenase (Catalytic Domain)"/>
    <property type="match status" value="1"/>
</dbReference>
<dbReference type="InterPro" id="IPR050414">
    <property type="entry name" value="Fungal_M35_metalloproteases"/>
</dbReference>
<dbReference type="InterPro" id="IPR029463">
    <property type="entry name" value="Lys_MEP"/>
</dbReference>
<dbReference type="InterPro" id="IPR024079">
    <property type="entry name" value="MetalloPept_cat_dom_sf"/>
</dbReference>
<dbReference type="InterPro" id="IPR001384">
    <property type="entry name" value="Peptidase_M35"/>
</dbReference>
<dbReference type="PANTHER" id="PTHR37016">
    <property type="match status" value="1"/>
</dbReference>
<dbReference type="PANTHER" id="PTHR37016:SF3">
    <property type="entry name" value="NEUTRAL PROTEASE 2-RELATED"/>
    <property type="match status" value="1"/>
</dbReference>
<dbReference type="Pfam" id="PF02102">
    <property type="entry name" value="Peptidase_M35"/>
    <property type="match status" value="1"/>
</dbReference>
<dbReference type="PRINTS" id="PR00768">
    <property type="entry name" value="DEUTEROLYSIN"/>
</dbReference>
<dbReference type="SMART" id="SM01351">
    <property type="entry name" value="Aspzincin_M35"/>
    <property type="match status" value="1"/>
</dbReference>
<dbReference type="SUPFAM" id="SSF55486">
    <property type="entry name" value="Metalloproteases ('zincins'), catalytic domain"/>
    <property type="match status" value="1"/>
</dbReference>
<dbReference type="PROSITE" id="PS00142">
    <property type="entry name" value="ZINC_PROTEASE"/>
    <property type="match status" value="1"/>
</dbReference>
<reference key="1">
    <citation type="journal article" date="2008" name="PLoS Genet.">
        <title>Genomic islands in the pathogenic filamentous fungus Aspergillus fumigatus.</title>
        <authorList>
            <person name="Fedorova N.D."/>
            <person name="Khaldi N."/>
            <person name="Joardar V.S."/>
            <person name="Maiti R."/>
            <person name="Amedeo P."/>
            <person name="Anderson M.J."/>
            <person name="Crabtree J."/>
            <person name="Silva J.C."/>
            <person name="Badger J.H."/>
            <person name="Albarraq A."/>
            <person name="Angiuoli S."/>
            <person name="Bussey H."/>
            <person name="Bowyer P."/>
            <person name="Cotty P.J."/>
            <person name="Dyer P.S."/>
            <person name="Egan A."/>
            <person name="Galens K."/>
            <person name="Fraser-Liggett C.M."/>
            <person name="Haas B.J."/>
            <person name="Inman J.M."/>
            <person name="Kent R."/>
            <person name="Lemieux S."/>
            <person name="Malavazi I."/>
            <person name="Orvis J."/>
            <person name="Roemer T."/>
            <person name="Ronning C.M."/>
            <person name="Sundaram J.P."/>
            <person name="Sutton G."/>
            <person name="Turner G."/>
            <person name="Venter J.C."/>
            <person name="White O.R."/>
            <person name="Whitty B.R."/>
            <person name="Youngman P."/>
            <person name="Wolfe K.H."/>
            <person name="Goldman G.H."/>
            <person name="Wortman J.R."/>
            <person name="Jiang B."/>
            <person name="Denning D.W."/>
            <person name="Nierman W.C."/>
        </authorList>
    </citation>
    <scope>NUCLEOTIDE SEQUENCE [LARGE SCALE GENOMIC DNA]</scope>
    <source>
        <strain>ATCC 1020 / DSM 3700 / CBS 544.65 / FGSC A1164 / JCM 1740 / NRRL 181 / WB 181</strain>
    </source>
</reference>
<sequence>MKITALASAILAVVHGALALPARAPALDITLSQVNNTRIKAVVKNSGSEKITFVHLNFFNDPSPVKKVSLYRNATEVEFTGIKQRLRSDGLSNEALTTLAPGATYEDEFDIASTANLTQGGPVTVRTQGFVPIAMNNKIAGYIPYSSNELELEVDAVKAVAVPASIKPLDRRTKITSSCTGDRAAVLNTALRNAASIAGKAANAASSGSSALFAEYFKSTSGNIRSAVAARLKAVASEASLNGGGSTTYYCSDPYGYCDSNVLAYTLPSTNEVVNCELFYTLQEVTNDCHGQDQATTIIHEFTHAPGVYPPGTEDLGYGYSAATALSANNALNNADSYALFANAVYLNCQGQTGGQTMWDGNSQPGQTAPGTQTMWDGNSQPGQTEPGTQTMWDGNSQPGQTEPGTQTMWDGNSQPGQTEPGTQTMWDGNSQPGQTEPCTQTMWDGSSEPGQTEPDAHTTWGNFYQA</sequence>
<accession>A1DA48</accession>
<evidence type="ECO:0000250" key="1"/>
<evidence type="ECO:0000255" key="2"/>
<evidence type="ECO:0000255" key="3">
    <source>
        <dbReference type="PROSITE-ProRule" id="PRU10095"/>
    </source>
</evidence>
<evidence type="ECO:0000256" key="4">
    <source>
        <dbReference type="SAM" id="MobiDB-lite"/>
    </source>
</evidence>
<evidence type="ECO:0000305" key="5"/>
<proteinExistence type="inferred from homology"/>
<feature type="signal peptide" evidence="2">
    <location>
        <begin position="1"/>
        <end position="19"/>
    </location>
</feature>
<feature type="propeptide" id="PRO_0000407106" evidence="1">
    <location>
        <begin position="20"/>
        <end position="172"/>
    </location>
</feature>
<feature type="chain" id="PRO_0000407107" description="Neutral protease 2 homolog NFIA_031120">
    <location>
        <begin position="173"/>
        <end position="467"/>
    </location>
</feature>
<feature type="region of interest" description="Disordered" evidence="4">
    <location>
        <begin position="359"/>
        <end position="467"/>
    </location>
</feature>
<feature type="compositionally biased region" description="Polar residues" evidence="4">
    <location>
        <begin position="359"/>
        <end position="451"/>
    </location>
</feature>
<feature type="active site" evidence="3">
    <location>
        <position position="301"/>
    </location>
</feature>
<feature type="binding site" evidence="3">
    <location>
        <position position="300"/>
    </location>
    <ligand>
        <name>Zn(2+)</name>
        <dbReference type="ChEBI" id="CHEBI:29105"/>
        <note>catalytic</note>
    </ligand>
</feature>
<feature type="binding site" evidence="3">
    <location>
        <position position="304"/>
    </location>
    <ligand>
        <name>Zn(2+)</name>
        <dbReference type="ChEBI" id="CHEBI:29105"/>
        <note>catalytic</note>
    </ligand>
</feature>
<feature type="binding site" evidence="3">
    <location>
        <position position="315"/>
    </location>
    <ligand>
        <name>Zn(2+)</name>
        <dbReference type="ChEBI" id="CHEBI:29105"/>
        <note>catalytic</note>
    </ligand>
</feature>
<feature type="disulfide bond" evidence="1">
    <location>
        <begin position="179"/>
        <end position="251"/>
    </location>
</feature>
<feature type="disulfide bond" evidence="1">
    <location>
        <begin position="258"/>
        <end position="276"/>
    </location>
</feature>
<comment type="function">
    <text evidence="1">Secreted metalloproteinase that allows assimilation of proteinaceous substrates. Shows high activities on basic nuclear substrates such as histone and protamine (By similarity).</text>
</comment>
<comment type="catalytic activity">
    <reaction>
        <text>Preferential cleavage of bonds with hydrophobic residues in P1'. Also 3-Asn-|-Gln-4 and 8-Gly-|-Ser-9 bonds in insulin B chain.</text>
        <dbReference type="EC" id="3.4.24.39"/>
    </reaction>
</comment>
<comment type="cofactor">
    <cofactor evidence="1">
        <name>Zn(2+)</name>
        <dbReference type="ChEBI" id="CHEBI:29105"/>
    </cofactor>
    <text evidence="1">Binds 1 zinc ion per subunit.</text>
</comment>
<comment type="subcellular location">
    <subcellularLocation>
        <location evidence="1">Secreted</location>
    </subcellularLocation>
</comment>
<comment type="similarity">
    <text evidence="5">Belongs to the peptidase M35 family.</text>
</comment>
<keyword id="KW-0165">Cleavage on pair of basic residues</keyword>
<keyword id="KW-1015">Disulfide bond</keyword>
<keyword id="KW-0378">Hydrolase</keyword>
<keyword id="KW-0479">Metal-binding</keyword>
<keyword id="KW-0482">Metalloprotease</keyword>
<keyword id="KW-0645">Protease</keyword>
<keyword id="KW-1185">Reference proteome</keyword>
<keyword id="KW-0964">Secreted</keyword>
<keyword id="KW-0732">Signal</keyword>
<keyword id="KW-0862">Zinc</keyword>
<keyword id="KW-0865">Zymogen</keyword>
<organism>
    <name type="scientific">Neosartorya fischeri (strain ATCC 1020 / DSM 3700 / CBS 544.65 / FGSC A1164 / JCM 1740 / NRRL 181 / WB 181)</name>
    <name type="common">Aspergillus fischerianus</name>
    <dbReference type="NCBI Taxonomy" id="331117"/>
    <lineage>
        <taxon>Eukaryota</taxon>
        <taxon>Fungi</taxon>
        <taxon>Dikarya</taxon>
        <taxon>Ascomycota</taxon>
        <taxon>Pezizomycotina</taxon>
        <taxon>Eurotiomycetes</taxon>
        <taxon>Eurotiomycetidae</taxon>
        <taxon>Eurotiales</taxon>
        <taxon>Aspergillaceae</taxon>
        <taxon>Aspergillus</taxon>
        <taxon>Aspergillus subgen. Fumigati</taxon>
    </lineage>
</organism>